<gene>
    <name evidence="1" type="primary">erpA</name>
    <name type="ordered locus">SbBS512_E0148</name>
</gene>
<keyword id="KW-0408">Iron</keyword>
<keyword id="KW-0411">Iron-sulfur</keyword>
<keyword id="KW-0479">Metal-binding</keyword>
<keyword id="KW-1185">Reference proteome</keyword>
<feature type="chain" id="PRO_1000144938" description="Iron-sulfur cluster insertion protein ErpA">
    <location>
        <begin position="1"/>
        <end position="114"/>
    </location>
</feature>
<feature type="binding site" evidence="1">
    <location>
        <position position="42"/>
    </location>
    <ligand>
        <name>iron-sulfur cluster</name>
        <dbReference type="ChEBI" id="CHEBI:30408"/>
    </ligand>
</feature>
<feature type="binding site" evidence="1">
    <location>
        <position position="106"/>
    </location>
    <ligand>
        <name>iron-sulfur cluster</name>
        <dbReference type="ChEBI" id="CHEBI:30408"/>
    </ligand>
</feature>
<feature type="binding site" evidence="1">
    <location>
        <position position="108"/>
    </location>
    <ligand>
        <name>iron-sulfur cluster</name>
        <dbReference type="ChEBI" id="CHEBI:30408"/>
    </ligand>
</feature>
<evidence type="ECO:0000255" key="1">
    <source>
        <dbReference type="HAMAP-Rule" id="MF_01380"/>
    </source>
</evidence>
<reference key="1">
    <citation type="submission" date="2008-05" db="EMBL/GenBank/DDBJ databases">
        <title>Complete sequence of Shigella boydii serotype 18 strain BS512.</title>
        <authorList>
            <person name="Rasko D.A."/>
            <person name="Rosovitz M."/>
            <person name="Maurelli A.T."/>
            <person name="Myers G."/>
            <person name="Seshadri R."/>
            <person name="Cer R."/>
            <person name="Jiang L."/>
            <person name="Ravel J."/>
            <person name="Sebastian Y."/>
        </authorList>
    </citation>
    <scope>NUCLEOTIDE SEQUENCE [LARGE SCALE GENOMIC DNA]</scope>
    <source>
        <strain>CDC 3083-94 / BS512</strain>
    </source>
</reference>
<protein>
    <recommendedName>
        <fullName evidence="1">Iron-sulfur cluster insertion protein ErpA</fullName>
    </recommendedName>
</protein>
<comment type="function">
    <text evidence="1">Required for insertion of 4Fe-4S clusters for at least IspG.</text>
</comment>
<comment type="cofactor">
    <cofactor evidence="1">
        <name>iron-sulfur cluster</name>
        <dbReference type="ChEBI" id="CHEBI:30408"/>
    </cofactor>
    <text evidence="1">Binds 1 iron-sulfur cluster per subunit.</text>
</comment>
<comment type="subunit">
    <text evidence="1">Homodimer.</text>
</comment>
<comment type="similarity">
    <text evidence="1">Belongs to the HesB/IscA family.</text>
</comment>
<organism>
    <name type="scientific">Shigella boydii serotype 18 (strain CDC 3083-94 / BS512)</name>
    <dbReference type="NCBI Taxonomy" id="344609"/>
    <lineage>
        <taxon>Bacteria</taxon>
        <taxon>Pseudomonadati</taxon>
        <taxon>Pseudomonadota</taxon>
        <taxon>Gammaproteobacteria</taxon>
        <taxon>Enterobacterales</taxon>
        <taxon>Enterobacteriaceae</taxon>
        <taxon>Shigella</taxon>
    </lineage>
</organism>
<sequence>MSDDVALPLEFTDAAANKVKSLIADEDNPNLKLRVYITGGGCSGFQYGFTFDDQVNEGDMTIEKQGVGLVVDPMSLQYLVGGSVDYTEGLEGSRFIVTNPNAKSTCGCGSSFSI</sequence>
<name>ERPA_SHIB3</name>
<accession>B2U301</accession>
<proteinExistence type="inferred from homology"/>
<dbReference type="EMBL" id="CP001063">
    <property type="protein sequence ID" value="ACD09393.1"/>
    <property type="molecule type" value="Genomic_DNA"/>
</dbReference>
<dbReference type="RefSeq" id="WP_001295564.1">
    <property type="nucleotide sequence ID" value="NC_010658.1"/>
</dbReference>
<dbReference type="SMR" id="B2U301"/>
<dbReference type="STRING" id="344609.SbBS512_E0148"/>
<dbReference type="GeneID" id="93777270"/>
<dbReference type="KEGG" id="sbc:SbBS512_E0148"/>
<dbReference type="HOGENOM" id="CLU_069054_5_3_6"/>
<dbReference type="Proteomes" id="UP000001030">
    <property type="component" value="Chromosome"/>
</dbReference>
<dbReference type="GO" id="GO:0005829">
    <property type="term" value="C:cytosol"/>
    <property type="evidence" value="ECO:0007669"/>
    <property type="project" value="TreeGrafter"/>
</dbReference>
<dbReference type="GO" id="GO:0051537">
    <property type="term" value="F:2 iron, 2 sulfur cluster binding"/>
    <property type="evidence" value="ECO:0007669"/>
    <property type="project" value="TreeGrafter"/>
</dbReference>
<dbReference type="GO" id="GO:0051539">
    <property type="term" value="F:4 iron, 4 sulfur cluster binding"/>
    <property type="evidence" value="ECO:0007669"/>
    <property type="project" value="TreeGrafter"/>
</dbReference>
<dbReference type="GO" id="GO:0005506">
    <property type="term" value="F:iron ion binding"/>
    <property type="evidence" value="ECO:0007669"/>
    <property type="project" value="UniProtKB-UniRule"/>
</dbReference>
<dbReference type="GO" id="GO:0016226">
    <property type="term" value="P:iron-sulfur cluster assembly"/>
    <property type="evidence" value="ECO:0007669"/>
    <property type="project" value="UniProtKB-UniRule"/>
</dbReference>
<dbReference type="FunFam" id="2.60.300.12:FF:000002">
    <property type="entry name" value="Iron-sulfur cluster insertion protein ErpA"/>
    <property type="match status" value="1"/>
</dbReference>
<dbReference type="Gene3D" id="2.60.300.12">
    <property type="entry name" value="HesB-like domain"/>
    <property type="match status" value="1"/>
</dbReference>
<dbReference type="HAMAP" id="MF_01380">
    <property type="entry name" value="Fe_S_insert_ErpA"/>
    <property type="match status" value="1"/>
</dbReference>
<dbReference type="InterPro" id="IPR000361">
    <property type="entry name" value="FeS_biogenesis"/>
</dbReference>
<dbReference type="InterPro" id="IPR016092">
    <property type="entry name" value="FeS_cluster_insertion"/>
</dbReference>
<dbReference type="InterPro" id="IPR017870">
    <property type="entry name" value="FeS_cluster_insertion_CS"/>
</dbReference>
<dbReference type="InterPro" id="IPR023063">
    <property type="entry name" value="FeS_cluster_insertion_RrpA"/>
</dbReference>
<dbReference type="InterPro" id="IPR035903">
    <property type="entry name" value="HesB-like_dom_sf"/>
</dbReference>
<dbReference type="NCBIfam" id="TIGR00049">
    <property type="entry name" value="iron-sulfur cluster assembly accessory protein"/>
    <property type="match status" value="1"/>
</dbReference>
<dbReference type="NCBIfam" id="NF010147">
    <property type="entry name" value="PRK13623.1"/>
    <property type="match status" value="1"/>
</dbReference>
<dbReference type="PANTHER" id="PTHR43011">
    <property type="entry name" value="IRON-SULFUR CLUSTER ASSEMBLY 2 HOMOLOG, MITOCHONDRIAL"/>
    <property type="match status" value="1"/>
</dbReference>
<dbReference type="PANTHER" id="PTHR43011:SF1">
    <property type="entry name" value="IRON-SULFUR CLUSTER ASSEMBLY 2 HOMOLOG, MITOCHONDRIAL"/>
    <property type="match status" value="1"/>
</dbReference>
<dbReference type="Pfam" id="PF01521">
    <property type="entry name" value="Fe-S_biosyn"/>
    <property type="match status" value="1"/>
</dbReference>
<dbReference type="SUPFAM" id="SSF89360">
    <property type="entry name" value="HesB-like domain"/>
    <property type="match status" value="1"/>
</dbReference>
<dbReference type="PROSITE" id="PS01152">
    <property type="entry name" value="HESB"/>
    <property type="match status" value="1"/>
</dbReference>